<comment type="function">
    <text evidence="2 7 8 9">Polyglutamylase which modifies tubulin, generating polyglutamate side chains of variable lengths on the gamma-carboxyl group of specific glutamate residues within the C-terminal tail of tubulin (PubMed:16901895, PubMed:17499049, PubMed:19152315). Mediates both ATP-dependent initiation and elongation steps of the polyglutamylation reaction (PubMed:16901895, PubMed:17499049, PubMed:19152315). Preferentially modifies the beta-tubulin tail over an alpha-tail (PubMed:16901895, PubMed:17499049, PubMed:19152315). Competes with monoglycylase TTLL3 for modification site on beta-tubulin substrate, thereby creating an anticorrelation between glycylation and glutamylation reactions (By similarity). Required for neurite growth; responsible for the strong increase in tubulin polyglutamylation during postnatal neuronal maturation (PubMed:16901895).</text>
</comment>
<comment type="catalytic activity">
    <reaction evidence="7 8 9">
        <text>L-glutamyl-[protein] + L-glutamate + ATP = gamma-L-glutamyl-L-glutamyl-[protein] + ADP + phosphate + H(+)</text>
        <dbReference type="Rhea" id="RHEA:60144"/>
        <dbReference type="Rhea" id="RHEA-COMP:10208"/>
        <dbReference type="Rhea" id="RHEA-COMP:15517"/>
        <dbReference type="ChEBI" id="CHEBI:15378"/>
        <dbReference type="ChEBI" id="CHEBI:29973"/>
        <dbReference type="ChEBI" id="CHEBI:29985"/>
        <dbReference type="ChEBI" id="CHEBI:30616"/>
        <dbReference type="ChEBI" id="CHEBI:43474"/>
        <dbReference type="ChEBI" id="CHEBI:143622"/>
        <dbReference type="ChEBI" id="CHEBI:456216"/>
    </reaction>
    <physiologicalReaction direction="left-to-right" evidence="14 15 16">
        <dbReference type="Rhea" id="RHEA:60145"/>
    </physiologicalReaction>
</comment>
<comment type="catalytic activity">
    <reaction evidence="7 8 9">
        <text>(L-glutamyl)(n)-gamma-L-glutamyl-L-glutamyl-[protein] + L-glutamate + ATP = (L-glutamyl)(n+1)-gamma-L-glutamyl-L-glutamyl-[protein] + ADP + phosphate + H(+)</text>
        <dbReference type="Rhea" id="RHEA:60148"/>
        <dbReference type="Rhea" id="RHEA-COMP:15519"/>
        <dbReference type="Rhea" id="RHEA-COMP:15675"/>
        <dbReference type="ChEBI" id="CHEBI:15378"/>
        <dbReference type="ChEBI" id="CHEBI:29985"/>
        <dbReference type="ChEBI" id="CHEBI:30616"/>
        <dbReference type="ChEBI" id="CHEBI:43474"/>
        <dbReference type="ChEBI" id="CHEBI:143623"/>
        <dbReference type="ChEBI" id="CHEBI:456216"/>
    </reaction>
    <physiologicalReaction direction="left-to-right" evidence="14 15 16">
        <dbReference type="Rhea" id="RHEA:60149"/>
    </physiologicalReaction>
</comment>
<comment type="cofactor">
    <cofactor evidence="1">
        <name>Mg(2+)</name>
        <dbReference type="ChEBI" id="CHEBI:18420"/>
    </cofactor>
</comment>
<comment type="biophysicochemical properties">
    <kinetics>
        <KM evidence="9">20.2 uM for Glu (with 17 uM of tubulin for adult mouse)</KM>
        <KM evidence="9">19.1 uM for ATP (with 17 uM of tubulin for adult mouse)</KM>
        <KM evidence="9">19.6 uM for Glu (with 17 uM of tubulin for newborn mouse)</KM>
        <KM evidence="9">26.5 uM for ATP (with 17 uM of tubulin for newborn mouse)</KM>
        <KM evidence="9">5.4 uM for Glu (with 50 uM of ATP for adult mouse)</KM>
        <KM evidence="9">21.8 uM for tubulin (with 50 uM of ATP for adult mouse)</KM>
        <KM evidence="9">4.4 uM for Glu (with 50 uM of ATP for newborn mouse)</KM>
        <KM evidence="9">15.8 uM for tubulin (with 50 uM of ATP for newborn mouse)</KM>
        <KM evidence="9">7.5 uM for ATP (with 6 uM of Glu for adult mouse)</KM>
        <KM evidence="9">3.1 uM for tubulin (with 6 uM of Glu for adult mouse)</KM>
        <KM evidence="9">16 uM for ATP (with 6 uM of Glu for newborn mouse)</KM>
        <KM evidence="9">6.7 uM for tubulin (with 6 uM of Glu for newborn mouse)</KM>
    </kinetics>
    <phDependence>
        <text evidence="9">Optimum pH is 7.0.</text>
    </phDependence>
</comment>
<comment type="subunit">
    <text evidence="3">Interacts with both alpha- and beta-tubulin (via C-terminal tubulin tails).</text>
</comment>
<comment type="subcellular location">
    <subcellularLocation>
        <location evidence="7 8">Cell projection</location>
        <location evidence="7 8">Cilium</location>
    </subcellularLocation>
    <subcellularLocation>
        <location evidence="7 8">Cytoplasm</location>
        <location evidence="7 8">Cytoskeleton</location>
        <location evidence="7 8">Cilium basal body</location>
    </subcellularLocation>
    <subcellularLocation>
        <location evidence="7 8">Cell projection</location>
        <location evidence="7 8">Dendrite</location>
    </subcellularLocation>
    <subcellularLocation>
        <location evidence="7 8">Perikaryon</location>
    </subcellularLocation>
    <text evidence="7 8">In cells with primary cilia, found in both cilia and basal bodies. In neuronal cells, found in dendrites and perikaryon.</text>
</comment>
<comment type="alternative products">
    <event type="alternative splicing"/>
    <isoform>
        <id>A4Q9F0-1</id>
        <name evidence="11">1</name>
        <sequence type="displayed"/>
    </isoform>
    <isoform>
        <id>A4Q9F0-2</id>
        <name evidence="11">2</name>
        <name evidence="11">TTLL7S</name>
        <sequence type="described" ref="VSP_052730 VSP_052731"/>
    </isoform>
</comment>
<comment type="tissue specificity">
    <text evidence="7 8">Highly expressed in brain, testis and trachea (PubMed:17499049). Expressed in brain, heart, kidney, liver, lung, muscle and trachea (PubMed:17499049). In the brain, highly expressed in hippocampus, thalamus, olfactory bulb and cerebellum cortex, corpus callosum and striatum (PubMed:16901895, PubMed:17499049).</text>
</comment>
<comment type="domain">
    <text evidence="3">The enzyme uses its core to engage the disordered anionic tails of alpha- and beta-tubulin and the flexible c-MTBD (cationic microtubule binding domain) region to bind the microtubule and position itself for beta-tail modification. The c-MTBD region is positively charged and becomes ordered when bound to microtubules: it interacts with a negatively charged patch on alpha-tubulin. The presence of positive charges in the c-MTBD region is essential for proper binding.</text>
</comment>
<comment type="miscellaneous">
    <molecule>Isoform 2</molecule>
    <text evidence="13">May be due to an intron retention.</text>
</comment>
<comment type="similarity">
    <text evidence="4">Belongs to the tubulin--tyrosine ligase family.</text>
</comment>
<comment type="caution">
    <text evidence="8 9">Was initially though to be involved in the side-chain initiation step of the polyglutamylation reaction rather than in the elongation step (PubMed:17499049). However, it was later shown to be involved in both steps (PubMed:19152315).</text>
</comment>
<dbReference type="EC" id="6.3.2.-" evidence="7 8 9"/>
<dbReference type="EMBL" id="AM690750">
    <property type="protein sequence ID" value="CAM84327.1"/>
    <property type="molecule type" value="mRNA"/>
</dbReference>
<dbReference type="EMBL" id="AM690751">
    <property type="protein sequence ID" value="CAM84328.1"/>
    <property type="molecule type" value="mRNA"/>
</dbReference>
<dbReference type="EMBL" id="AK014905">
    <property type="protein sequence ID" value="BAB29613.1"/>
    <property type="molecule type" value="mRNA"/>
</dbReference>
<dbReference type="EMBL" id="AK083236">
    <property type="protein sequence ID" value="BAC38821.1"/>
    <property type="molecule type" value="mRNA"/>
</dbReference>
<dbReference type="CCDS" id="CCDS51094.2">
    <molecule id="A4Q9F0-1"/>
</dbReference>
<dbReference type="RefSeq" id="NP_001289887.1">
    <molecule id="A4Q9F0-2"/>
    <property type="nucleotide sequence ID" value="NM_001302958.1"/>
</dbReference>
<dbReference type="SMR" id="A4Q9F0"/>
<dbReference type="FunCoup" id="A4Q9F0">
    <property type="interactions" value="224"/>
</dbReference>
<dbReference type="IntAct" id="A4Q9F0">
    <property type="interactions" value="10"/>
</dbReference>
<dbReference type="STRING" id="10090.ENSMUSP00000043753"/>
<dbReference type="BindingDB" id="A4Q9F0"/>
<dbReference type="ChEMBL" id="CHEMBL2401604"/>
<dbReference type="iPTMnet" id="A4Q9F0"/>
<dbReference type="PhosphoSitePlus" id="A4Q9F0"/>
<dbReference type="PaxDb" id="10090-ENSMUSP00000129369"/>
<dbReference type="ProteomicsDB" id="298020">
    <molecule id="A4Q9F0-1"/>
</dbReference>
<dbReference type="ProteomicsDB" id="298021">
    <molecule id="A4Q9F0-2"/>
</dbReference>
<dbReference type="GeneID" id="70892"/>
<dbReference type="KEGG" id="mmu:70892"/>
<dbReference type="UCSC" id="uc008rrw.2">
    <molecule id="A4Q9F0-2"/>
    <property type="organism name" value="mouse"/>
</dbReference>
<dbReference type="UCSC" id="uc008rrx.2">
    <molecule id="A4Q9F0-1"/>
    <property type="organism name" value="mouse"/>
</dbReference>
<dbReference type="AGR" id="MGI:1918142"/>
<dbReference type="CTD" id="79739"/>
<dbReference type="MGI" id="MGI:1918142">
    <property type="gene designation" value="Ttll7"/>
</dbReference>
<dbReference type="eggNOG" id="KOG2158">
    <property type="taxonomic scope" value="Eukaryota"/>
</dbReference>
<dbReference type="InParanoid" id="A4Q9F0"/>
<dbReference type="OrthoDB" id="202825at2759"/>
<dbReference type="BRENDA" id="6.3.2.B24">
    <property type="organism ID" value="3474"/>
</dbReference>
<dbReference type="Reactome" id="R-MMU-8955332">
    <property type="pathway name" value="Carboxyterminal post-translational modifications of tubulin"/>
</dbReference>
<dbReference type="BioGRID-ORCS" id="70892">
    <property type="hits" value="1 hit in 45 CRISPR screens"/>
</dbReference>
<dbReference type="PRO" id="PR:A4Q9F0"/>
<dbReference type="Proteomes" id="UP000000589">
    <property type="component" value="Unplaced"/>
</dbReference>
<dbReference type="RNAct" id="A4Q9F0">
    <property type="molecule type" value="protein"/>
</dbReference>
<dbReference type="GO" id="GO:0097731">
    <property type="term" value="C:9+0 non-motile cilium"/>
    <property type="evidence" value="ECO:0000314"/>
    <property type="project" value="MGI"/>
</dbReference>
<dbReference type="GO" id="GO:0036064">
    <property type="term" value="C:ciliary basal body"/>
    <property type="evidence" value="ECO:0000314"/>
    <property type="project" value="MGI"/>
</dbReference>
<dbReference type="GO" id="GO:0005737">
    <property type="term" value="C:cytoplasm"/>
    <property type="evidence" value="ECO:0007669"/>
    <property type="project" value="UniProtKB-KW"/>
</dbReference>
<dbReference type="GO" id="GO:0030425">
    <property type="term" value="C:dendrite"/>
    <property type="evidence" value="ECO:0007669"/>
    <property type="project" value="UniProtKB-SubCell"/>
</dbReference>
<dbReference type="GO" id="GO:0005874">
    <property type="term" value="C:microtubule"/>
    <property type="evidence" value="ECO:0007669"/>
    <property type="project" value="UniProtKB-KW"/>
</dbReference>
<dbReference type="GO" id="GO:0043204">
    <property type="term" value="C:perikaryon"/>
    <property type="evidence" value="ECO:0007669"/>
    <property type="project" value="UniProtKB-SubCell"/>
</dbReference>
<dbReference type="GO" id="GO:0043014">
    <property type="term" value="F:alpha-tubulin binding"/>
    <property type="evidence" value="ECO:0000250"/>
    <property type="project" value="UniProtKB"/>
</dbReference>
<dbReference type="GO" id="GO:0005524">
    <property type="term" value="F:ATP binding"/>
    <property type="evidence" value="ECO:0007669"/>
    <property type="project" value="UniProtKB-KW"/>
</dbReference>
<dbReference type="GO" id="GO:0048487">
    <property type="term" value="F:beta-tubulin binding"/>
    <property type="evidence" value="ECO:0000250"/>
    <property type="project" value="UniProtKB"/>
</dbReference>
<dbReference type="GO" id="GO:0046872">
    <property type="term" value="F:metal ion binding"/>
    <property type="evidence" value="ECO:0007669"/>
    <property type="project" value="UniProtKB-KW"/>
</dbReference>
<dbReference type="GO" id="GO:0106438">
    <property type="term" value="F:protein-glutamic acid ligase activity, elongating"/>
    <property type="evidence" value="ECO:0007669"/>
    <property type="project" value="RHEA"/>
</dbReference>
<dbReference type="GO" id="GO:0106437">
    <property type="term" value="F:protein-glutamic acid ligase activity, initiating"/>
    <property type="evidence" value="ECO:0007669"/>
    <property type="project" value="RHEA"/>
</dbReference>
<dbReference type="GO" id="GO:0070740">
    <property type="term" value="F:tubulin-glutamic acid ligase activity"/>
    <property type="evidence" value="ECO:0000314"/>
    <property type="project" value="UniProtKB"/>
</dbReference>
<dbReference type="GO" id="GO:0030154">
    <property type="term" value="P:cell differentiation"/>
    <property type="evidence" value="ECO:0007669"/>
    <property type="project" value="UniProtKB-KW"/>
</dbReference>
<dbReference type="GO" id="GO:0007399">
    <property type="term" value="P:nervous system development"/>
    <property type="evidence" value="ECO:0007669"/>
    <property type="project" value="UniProtKB-KW"/>
</dbReference>
<dbReference type="GO" id="GO:0018095">
    <property type="term" value="P:protein polyglutamylation"/>
    <property type="evidence" value="ECO:0000314"/>
    <property type="project" value="UniProtKB"/>
</dbReference>
<dbReference type="FunFam" id="3.30.470.20:FF:000009">
    <property type="entry name" value="tubulin polyglutamylase TTLL5 isoform X1"/>
    <property type="match status" value="1"/>
</dbReference>
<dbReference type="Gene3D" id="3.30.470.20">
    <property type="entry name" value="ATP-grasp fold, B domain"/>
    <property type="match status" value="1"/>
</dbReference>
<dbReference type="InterPro" id="IPR004344">
    <property type="entry name" value="TTL/TTLL_fam"/>
</dbReference>
<dbReference type="PANTHER" id="PTHR12241">
    <property type="entry name" value="TUBULIN POLYGLUTAMYLASE"/>
    <property type="match status" value="1"/>
</dbReference>
<dbReference type="PANTHER" id="PTHR12241:SF147">
    <property type="entry name" value="TUBULIN POLYGLUTAMYLASE TTLL7"/>
    <property type="match status" value="1"/>
</dbReference>
<dbReference type="Pfam" id="PF03133">
    <property type="entry name" value="TTL"/>
    <property type="match status" value="1"/>
</dbReference>
<dbReference type="SUPFAM" id="SSF56059">
    <property type="entry name" value="Glutathione synthetase ATP-binding domain-like"/>
    <property type="match status" value="1"/>
</dbReference>
<dbReference type="PROSITE" id="PS51221">
    <property type="entry name" value="TTL"/>
    <property type="match status" value="1"/>
</dbReference>
<evidence type="ECO:0000250" key="1">
    <source>
        <dbReference type="UniProtKB" id="A4Q9E8"/>
    </source>
</evidence>
<evidence type="ECO:0000250" key="2">
    <source>
        <dbReference type="UniProtKB" id="F7E540"/>
    </source>
</evidence>
<evidence type="ECO:0000250" key="3">
    <source>
        <dbReference type="UniProtKB" id="Q6ZT98"/>
    </source>
</evidence>
<evidence type="ECO:0000255" key="4"/>
<evidence type="ECO:0000255" key="5">
    <source>
        <dbReference type="PROSITE-ProRule" id="PRU00568"/>
    </source>
</evidence>
<evidence type="ECO:0000256" key="6">
    <source>
        <dbReference type="SAM" id="MobiDB-lite"/>
    </source>
</evidence>
<evidence type="ECO:0000269" key="7">
    <source>
    </source>
</evidence>
<evidence type="ECO:0000269" key="8">
    <source>
    </source>
</evidence>
<evidence type="ECO:0000269" key="9">
    <source>
    </source>
</evidence>
<evidence type="ECO:0000303" key="10">
    <source>
    </source>
</evidence>
<evidence type="ECO:0000303" key="11">
    <source>
    </source>
</evidence>
<evidence type="ECO:0000303" key="12">
    <source>
    </source>
</evidence>
<evidence type="ECO:0000305" key="13"/>
<evidence type="ECO:0000305" key="14">
    <source>
    </source>
</evidence>
<evidence type="ECO:0000305" key="15">
    <source>
    </source>
</evidence>
<evidence type="ECO:0000305" key="16">
    <source>
    </source>
</evidence>
<evidence type="ECO:0000312" key="17">
    <source>
        <dbReference type="EMBL" id="BAB29613.1"/>
    </source>
</evidence>
<evidence type="ECO:0000312" key="18">
    <source>
        <dbReference type="EMBL" id="BAC38821.1"/>
    </source>
</evidence>
<evidence type="ECO:0000312" key="19">
    <source>
        <dbReference type="EMBL" id="CAM84328.1"/>
    </source>
</evidence>
<evidence type="ECO:0000312" key="20">
    <source>
        <dbReference type="MGI" id="MGI:1918142"/>
    </source>
</evidence>
<proteinExistence type="evidence at protein level"/>
<gene>
    <name evidence="20" type="primary">Ttll7</name>
</gene>
<accession>A4Q9F0</accession>
<accession>A4Q9E9</accession>
<accession>Q8C417</accession>
<accession>Q9D5V3</accession>
<name>TTLL7_MOUSE</name>
<organism>
    <name type="scientific">Mus musculus</name>
    <name type="common">Mouse</name>
    <dbReference type="NCBI Taxonomy" id="10090"/>
    <lineage>
        <taxon>Eukaryota</taxon>
        <taxon>Metazoa</taxon>
        <taxon>Chordata</taxon>
        <taxon>Craniata</taxon>
        <taxon>Vertebrata</taxon>
        <taxon>Euteleostomi</taxon>
        <taxon>Mammalia</taxon>
        <taxon>Eutheria</taxon>
        <taxon>Euarchontoglires</taxon>
        <taxon>Glires</taxon>
        <taxon>Rodentia</taxon>
        <taxon>Myomorpha</taxon>
        <taxon>Muroidea</taxon>
        <taxon>Muridae</taxon>
        <taxon>Murinae</taxon>
        <taxon>Mus</taxon>
        <taxon>Mus</taxon>
    </lineage>
</organism>
<reference key="1">
    <citation type="journal article" date="2007" name="Mol. Cell">
        <title>A targeted multienzyme mechanism for selective microtubule polyglutamylation.</title>
        <authorList>
            <person name="van Dijk J."/>
            <person name="Rogowski K."/>
            <person name="Miro J."/>
            <person name="Lacroix B."/>
            <person name="Edde B."/>
            <person name="Janke C."/>
        </authorList>
    </citation>
    <scope>NUCLEOTIDE SEQUENCE [MRNA] (ISOFORMS 1 AND 2)</scope>
    <scope>FUNCTION</scope>
    <scope>CATALYTIC ACTIVITY</scope>
    <scope>SUBCELLULAR LOCATION</scope>
    <scope>TISSUE SPECIFICITY</scope>
    <source>
        <strain evidence="19">C57BL/6J</strain>
        <tissue evidence="19">Testis</tissue>
    </source>
</reference>
<reference key="2">
    <citation type="journal article" date="2005" name="Science">
        <title>The transcriptional landscape of the mammalian genome.</title>
        <authorList>
            <person name="Carninci P."/>
            <person name="Kasukawa T."/>
            <person name="Katayama S."/>
            <person name="Gough J."/>
            <person name="Frith M.C."/>
            <person name="Maeda N."/>
            <person name="Oyama R."/>
            <person name="Ravasi T."/>
            <person name="Lenhard B."/>
            <person name="Wells C."/>
            <person name="Kodzius R."/>
            <person name="Shimokawa K."/>
            <person name="Bajic V.B."/>
            <person name="Brenner S.E."/>
            <person name="Batalov S."/>
            <person name="Forrest A.R."/>
            <person name="Zavolan M."/>
            <person name="Davis M.J."/>
            <person name="Wilming L.G."/>
            <person name="Aidinis V."/>
            <person name="Allen J.E."/>
            <person name="Ambesi-Impiombato A."/>
            <person name="Apweiler R."/>
            <person name="Aturaliya R.N."/>
            <person name="Bailey T.L."/>
            <person name="Bansal M."/>
            <person name="Baxter L."/>
            <person name="Beisel K.W."/>
            <person name="Bersano T."/>
            <person name="Bono H."/>
            <person name="Chalk A.M."/>
            <person name="Chiu K.P."/>
            <person name="Choudhary V."/>
            <person name="Christoffels A."/>
            <person name="Clutterbuck D.R."/>
            <person name="Crowe M.L."/>
            <person name="Dalla E."/>
            <person name="Dalrymple B.P."/>
            <person name="de Bono B."/>
            <person name="Della Gatta G."/>
            <person name="di Bernardo D."/>
            <person name="Down T."/>
            <person name="Engstrom P."/>
            <person name="Fagiolini M."/>
            <person name="Faulkner G."/>
            <person name="Fletcher C.F."/>
            <person name="Fukushima T."/>
            <person name="Furuno M."/>
            <person name="Futaki S."/>
            <person name="Gariboldi M."/>
            <person name="Georgii-Hemming P."/>
            <person name="Gingeras T.R."/>
            <person name="Gojobori T."/>
            <person name="Green R.E."/>
            <person name="Gustincich S."/>
            <person name="Harbers M."/>
            <person name="Hayashi Y."/>
            <person name="Hensch T.K."/>
            <person name="Hirokawa N."/>
            <person name="Hill D."/>
            <person name="Huminiecki L."/>
            <person name="Iacono M."/>
            <person name="Ikeo K."/>
            <person name="Iwama A."/>
            <person name="Ishikawa T."/>
            <person name="Jakt M."/>
            <person name="Kanapin A."/>
            <person name="Katoh M."/>
            <person name="Kawasawa Y."/>
            <person name="Kelso J."/>
            <person name="Kitamura H."/>
            <person name="Kitano H."/>
            <person name="Kollias G."/>
            <person name="Krishnan S.P."/>
            <person name="Kruger A."/>
            <person name="Kummerfeld S.K."/>
            <person name="Kurochkin I.V."/>
            <person name="Lareau L.F."/>
            <person name="Lazarevic D."/>
            <person name="Lipovich L."/>
            <person name="Liu J."/>
            <person name="Liuni S."/>
            <person name="McWilliam S."/>
            <person name="Madan Babu M."/>
            <person name="Madera M."/>
            <person name="Marchionni L."/>
            <person name="Matsuda H."/>
            <person name="Matsuzawa S."/>
            <person name="Miki H."/>
            <person name="Mignone F."/>
            <person name="Miyake S."/>
            <person name="Morris K."/>
            <person name="Mottagui-Tabar S."/>
            <person name="Mulder N."/>
            <person name="Nakano N."/>
            <person name="Nakauchi H."/>
            <person name="Ng P."/>
            <person name="Nilsson R."/>
            <person name="Nishiguchi S."/>
            <person name="Nishikawa S."/>
            <person name="Nori F."/>
            <person name="Ohara O."/>
            <person name="Okazaki Y."/>
            <person name="Orlando V."/>
            <person name="Pang K.C."/>
            <person name="Pavan W.J."/>
            <person name="Pavesi G."/>
            <person name="Pesole G."/>
            <person name="Petrovsky N."/>
            <person name="Piazza S."/>
            <person name="Reed J."/>
            <person name="Reid J.F."/>
            <person name="Ring B.Z."/>
            <person name="Ringwald M."/>
            <person name="Rost B."/>
            <person name="Ruan Y."/>
            <person name="Salzberg S.L."/>
            <person name="Sandelin A."/>
            <person name="Schneider C."/>
            <person name="Schoenbach C."/>
            <person name="Sekiguchi K."/>
            <person name="Semple C.A."/>
            <person name="Seno S."/>
            <person name="Sessa L."/>
            <person name="Sheng Y."/>
            <person name="Shibata Y."/>
            <person name="Shimada H."/>
            <person name="Shimada K."/>
            <person name="Silva D."/>
            <person name="Sinclair B."/>
            <person name="Sperling S."/>
            <person name="Stupka E."/>
            <person name="Sugiura K."/>
            <person name="Sultana R."/>
            <person name="Takenaka Y."/>
            <person name="Taki K."/>
            <person name="Tammoja K."/>
            <person name="Tan S.L."/>
            <person name="Tang S."/>
            <person name="Taylor M.S."/>
            <person name="Tegner J."/>
            <person name="Teichmann S.A."/>
            <person name="Ueda H.R."/>
            <person name="van Nimwegen E."/>
            <person name="Verardo R."/>
            <person name="Wei C.L."/>
            <person name="Yagi K."/>
            <person name="Yamanishi H."/>
            <person name="Zabarovsky E."/>
            <person name="Zhu S."/>
            <person name="Zimmer A."/>
            <person name="Hide W."/>
            <person name="Bult C."/>
            <person name="Grimmond S.M."/>
            <person name="Teasdale R.D."/>
            <person name="Liu E.T."/>
            <person name="Brusic V."/>
            <person name="Quackenbush J."/>
            <person name="Wahlestedt C."/>
            <person name="Mattick J.S."/>
            <person name="Hume D.A."/>
            <person name="Kai C."/>
            <person name="Sasaki D."/>
            <person name="Tomaru Y."/>
            <person name="Fukuda S."/>
            <person name="Kanamori-Katayama M."/>
            <person name="Suzuki M."/>
            <person name="Aoki J."/>
            <person name="Arakawa T."/>
            <person name="Iida J."/>
            <person name="Imamura K."/>
            <person name="Itoh M."/>
            <person name="Kato T."/>
            <person name="Kawaji H."/>
            <person name="Kawagashira N."/>
            <person name="Kawashima T."/>
            <person name="Kojima M."/>
            <person name="Kondo S."/>
            <person name="Konno H."/>
            <person name="Nakano K."/>
            <person name="Ninomiya N."/>
            <person name="Nishio T."/>
            <person name="Okada M."/>
            <person name="Plessy C."/>
            <person name="Shibata K."/>
            <person name="Shiraki T."/>
            <person name="Suzuki S."/>
            <person name="Tagami M."/>
            <person name="Waki K."/>
            <person name="Watahiki A."/>
            <person name="Okamura-Oho Y."/>
            <person name="Suzuki H."/>
            <person name="Kawai J."/>
            <person name="Hayashizaki Y."/>
        </authorList>
    </citation>
    <scope>NUCLEOTIDE SEQUENCE [LARGE SCALE MRNA] (ISOFORM 2)</scope>
    <scope>NUCLEOTIDE SEQUENCE [LARGE SCALE MRNA] OF 636-912 (ISOFORM 1)</scope>
    <source>
        <strain evidence="17">C57BL/6J</strain>
        <tissue evidence="18">Hippocampus</tissue>
        <tissue evidence="17">Testis</tissue>
    </source>
</reference>
<reference key="3">
    <citation type="journal article" date="2006" name="J. Biol. Chem.">
        <title>TTLL7 is a mammalian beta-tubulin polyglutamylase required for growth of MAP2-positive neurites.</title>
        <authorList>
            <person name="Ikegami K."/>
            <person name="Mukai M."/>
            <person name="Tsuchida J."/>
            <person name="Heier R.L."/>
            <person name="Macgregor G.R."/>
            <person name="Setou M."/>
        </authorList>
    </citation>
    <scope>FUNCTION</scope>
    <scope>CATALYTIC ACTIVITY</scope>
    <scope>SUBCELLULAR LOCATION</scope>
    <scope>TISSUE SPECIFICITY</scope>
    <scope>MUTAGENESIS OF GLU-349</scope>
</reference>
<reference key="4">
    <citation type="journal article" date="2009" name="Biochemistry">
        <title>Recombinant mammalian tubulin polyglutamylase TTLL7 performs both initiation and elongation of polyglutamylation on beta-tubulin through a random sequential pathway.</title>
        <authorList>
            <person name="Mukai M."/>
            <person name="Ikegami K."/>
            <person name="Sugiura Y."/>
            <person name="Takeshita K."/>
            <person name="Nakagawa A."/>
            <person name="Setou M."/>
        </authorList>
    </citation>
    <scope>FUNCTION</scope>
    <scope>CATALYTIC ACTIVITY</scope>
    <scope>BIOPHYSICOCHEMICAL PROPERTIES</scope>
</reference>
<feature type="chain" id="PRO_0000326163" description="Tubulin polyglutamylase TTLL7">
    <location>
        <begin position="1"/>
        <end position="912"/>
    </location>
</feature>
<feature type="domain" description="TTL" evidence="5">
    <location>
        <begin position="38"/>
        <end position="390"/>
    </location>
</feature>
<feature type="region of interest" description="c-MTBD region" evidence="3">
    <location>
        <begin position="388"/>
        <end position="450"/>
    </location>
</feature>
<feature type="region of interest" description="Disordered" evidence="6">
    <location>
        <begin position="547"/>
        <end position="570"/>
    </location>
</feature>
<feature type="region of interest" description="Disordered" evidence="6">
    <location>
        <begin position="658"/>
        <end position="688"/>
    </location>
</feature>
<feature type="compositionally biased region" description="Low complexity" evidence="6">
    <location>
        <begin position="549"/>
        <end position="563"/>
    </location>
</feature>
<feature type="compositionally biased region" description="Polar residues" evidence="6">
    <location>
        <begin position="659"/>
        <end position="671"/>
    </location>
</feature>
<feature type="binding site" evidence="1">
    <location>
        <position position="160"/>
    </location>
    <ligand>
        <name>ATP</name>
        <dbReference type="ChEBI" id="CHEBI:30616"/>
    </ligand>
</feature>
<feature type="binding site" evidence="1">
    <location>
        <begin position="166"/>
        <end position="167"/>
    </location>
    <ligand>
        <name>ATP</name>
        <dbReference type="ChEBI" id="CHEBI:30616"/>
    </ligand>
</feature>
<feature type="binding site" evidence="3">
    <location>
        <begin position="188"/>
        <end position="191"/>
    </location>
    <ligand>
        <name>ATP</name>
        <dbReference type="ChEBI" id="CHEBI:30616"/>
    </ligand>
</feature>
<feature type="binding site" evidence="3">
    <location>
        <begin position="201"/>
        <end position="203"/>
    </location>
    <ligand>
        <name>ATP</name>
        <dbReference type="ChEBI" id="CHEBI:30616"/>
    </ligand>
</feature>
<feature type="binding site" evidence="1">
    <location>
        <position position="227"/>
    </location>
    <ligand>
        <name>L-glutamate</name>
        <dbReference type="ChEBI" id="CHEBI:29985"/>
    </ligand>
</feature>
<feature type="binding site" evidence="1">
    <location>
        <begin position="249"/>
        <end position="250"/>
    </location>
    <ligand>
        <name>ATP</name>
        <dbReference type="ChEBI" id="CHEBI:30616"/>
    </ligand>
</feature>
<feature type="binding site" evidence="1">
    <location>
        <position position="251"/>
    </location>
    <ligand>
        <name>L-glutamate</name>
        <dbReference type="ChEBI" id="CHEBI:29985"/>
    </ligand>
</feature>
<feature type="binding site" evidence="1">
    <location>
        <position position="252"/>
    </location>
    <ligand>
        <name>L-glutamate</name>
        <dbReference type="ChEBI" id="CHEBI:29985"/>
    </ligand>
</feature>
<feature type="binding site" evidence="1">
    <location>
        <position position="271"/>
    </location>
    <ligand>
        <name>L-glutamate</name>
        <dbReference type="ChEBI" id="CHEBI:29985"/>
    </ligand>
</feature>
<feature type="binding site" evidence="1">
    <location>
        <position position="336"/>
    </location>
    <ligand>
        <name>Mg(2+)</name>
        <dbReference type="ChEBI" id="CHEBI:18420"/>
        <label>1</label>
    </ligand>
</feature>
<feature type="binding site" evidence="1">
    <location>
        <position position="349"/>
    </location>
    <ligand>
        <name>Mg(2+)</name>
        <dbReference type="ChEBI" id="CHEBI:18420"/>
        <label>1</label>
    </ligand>
</feature>
<feature type="binding site" evidence="1">
    <location>
        <position position="349"/>
    </location>
    <ligand>
        <name>Mg(2+)</name>
        <dbReference type="ChEBI" id="CHEBI:18420"/>
        <label>2</label>
    </ligand>
</feature>
<feature type="binding site" evidence="1">
    <location>
        <position position="351"/>
    </location>
    <ligand>
        <name>Mg(2+)</name>
        <dbReference type="ChEBI" id="CHEBI:18420"/>
        <label>2</label>
    </ligand>
</feature>
<feature type="binding site" evidence="1">
    <location>
        <position position="367"/>
    </location>
    <ligand>
        <name>L-glutamate</name>
        <dbReference type="ChEBI" id="CHEBI:29985"/>
    </ligand>
</feature>
<feature type="site" description="Binds negatively charged residues of beta-tubulin C-terminal tails" evidence="3">
    <location>
        <position position="106"/>
    </location>
</feature>
<feature type="site" description="Binds negatively charged residues of beta-tubulin C-terminal tails" evidence="3">
    <location>
        <position position="352"/>
    </location>
</feature>
<feature type="splice variant" id="VSP_052730" description="In isoform 2." evidence="10 11">
    <original>PSGSHNLIYSESPV</original>
    <variation>SSKSISPTSLEEEL</variation>
    <location>
        <begin position="596"/>
        <end position="609"/>
    </location>
</feature>
<feature type="splice variant" id="VSP_052731" description="In isoform 2." evidence="10 11">
    <location>
        <begin position="610"/>
        <end position="912"/>
    </location>
</feature>
<feature type="mutagenesis site" description="Loss of activity." evidence="7">
    <original>E</original>
    <variation>V</variation>
    <location>
        <position position="349"/>
    </location>
</feature>
<feature type="sequence conflict" description="In Ref. 2; BAB29613." evidence="13" ref="2">
    <original>F</original>
    <variation>Y</variation>
    <location>
        <position position="98"/>
    </location>
</feature>
<keyword id="KW-0025">Alternative splicing</keyword>
<keyword id="KW-0067">ATP-binding</keyword>
<keyword id="KW-0966">Cell projection</keyword>
<keyword id="KW-0969">Cilium</keyword>
<keyword id="KW-0963">Cytoplasm</keyword>
<keyword id="KW-0206">Cytoskeleton</keyword>
<keyword id="KW-0217">Developmental protein</keyword>
<keyword id="KW-0221">Differentiation</keyword>
<keyword id="KW-0436">Ligase</keyword>
<keyword id="KW-0460">Magnesium</keyword>
<keyword id="KW-0479">Metal-binding</keyword>
<keyword id="KW-0493">Microtubule</keyword>
<keyword id="KW-0524">Neurogenesis</keyword>
<keyword id="KW-0547">Nucleotide-binding</keyword>
<keyword id="KW-1185">Reference proteome</keyword>
<protein>
    <recommendedName>
        <fullName evidence="15">Tubulin polyglutamylase TTLL7</fullName>
        <ecNumber evidence="7 8 9">6.3.2.-</ecNumber>
    </recommendedName>
    <alternativeName>
        <fullName evidence="14">Tubulin--tyrosine ligase-like protein 7</fullName>
        <shortName evidence="12">mTTLL7</shortName>
    </alternativeName>
</protein>
<sequence length="912" mass="105501">MPSLPQDGVIQGSSPVDLGTELPYQCTMKRKVRKKKKKGIITANVAGTKFEIVRLVIDEMGFMKTPDEDETSNLIWCDAAVQQEKITDLQNYQRINHFPGMGEICRKDFLARNMTKMIKSRPMDYTFVPRTWIFPSEYTQFQNYVKELKKKRKQKTFIVKPANGAMGHGISLIRNGDKVPSQDHLIVQEYIEKPFLMEGYKFDLRIYILVTSCDPLKIFLYHDGLVRMGTEKYIPPNESNLTQLYMHLTNYSVNKHNERFERNETEDKGSKRSIKWFTEFLQANQHDVTKFWSDISELVVKTLIVAEPHVLHAYRMCRPGQPPGSESVCFEVLGFDILLDRKLKPWLLEINRAPSFGTDQKIDYDVKRGVLLNALKLLNIRTSDKRKNLAKQKAEAQRRLYGQNPVRRLSPGSSDWEQQRHQLERRKEELKERLLQVRKQVSQEEHENRHMGNYRRIYPPEDKALLEKYEGLLAVAFQTFLSGRAASFQREMNNPLKKMREEDLLDLLEQCEIDDEKLMGKTGRVRGPKPLCCMPECAEVTKKQKYYGSSDSSYDSSSSSSNSELDENEKELCQKRLDQVPYSLKHTSHCKIIQQPSGSHNLIYSESPVYLTTLVFLSEFPDSMRRSVSCPRSISAHLPSRGDVRPFSSQQVIPLARPTSASRSHSLNRASSYARHLPHGSDTGSTNTLNESLRQLKTKEQEDDLTSQTLFVLKDMRIRFPGKSDAESELLIEDIMDNWKHYKTKVASYWLIKLDSVKQRKVLDIVKSSIRTVLPRIWRVPDAEELSLYRIFNRVFNRLLWSHGQGLWSCFCDSGSSWESIFSKSPEVVTPLQLQCCQRLVELCKQCLLVVYKYTTETRGPISGIGPDWGNSRYLLPGSTQFLMRSPLYNMKYNSPGMTRSNVLFTSRYGRL</sequence>